<dbReference type="EC" id="5.4.2.11" evidence="1"/>
<dbReference type="EMBL" id="CP001145">
    <property type="protein sequence ID" value="ACI17738.1"/>
    <property type="molecule type" value="Genomic_DNA"/>
</dbReference>
<dbReference type="RefSeq" id="WP_012544390.1">
    <property type="nucleotide sequence ID" value="NC_011295.1"/>
</dbReference>
<dbReference type="SMR" id="B5Y7Q7"/>
<dbReference type="STRING" id="309798.COPRO5265_0439"/>
<dbReference type="KEGG" id="cpo:COPRO5265_0439"/>
<dbReference type="eggNOG" id="COG0588">
    <property type="taxonomic scope" value="Bacteria"/>
</dbReference>
<dbReference type="HOGENOM" id="CLU_033323_1_1_9"/>
<dbReference type="OrthoDB" id="9781415at2"/>
<dbReference type="UniPathway" id="UPA00109">
    <property type="reaction ID" value="UER00186"/>
</dbReference>
<dbReference type="Proteomes" id="UP000001732">
    <property type="component" value="Chromosome"/>
</dbReference>
<dbReference type="GO" id="GO:0004619">
    <property type="term" value="F:phosphoglycerate mutase activity"/>
    <property type="evidence" value="ECO:0007669"/>
    <property type="project" value="UniProtKB-EC"/>
</dbReference>
<dbReference type="GO" id="GO:0006094">
    <property type="term" value="P:gluconeogenesis"/>
    <property type="evidence" value="ECO:0007669"/>
    <property type="project" value="UniProtKB-UniRule"/>
</dbReference>
<dbReference type="GO" id="GO:0006096">
    <property type="term" value="P:glycolytic process"/>
    <property type="evidence" value="ECO:0007669"/>
    <property type="project" value="UniProtKB-UniRule"/>
</dbReference>
<dbReference type="CDD" id="cd07067">
    <property type="entry name" value="HP_PGM_like"/>
    <property type="match status" value="1"/>
</dbReference>
<dbReference type="FunFam" id="3.40.50.1240:FF:000003">
    <property type="entry name" value="2,3-bisphosphoglycerate-dependent phosphoglycerate mutase"/>
    <property type="match status" value="1"/>
</dbReference>
<dbReference type="Gene3D" id="3.40.50.1240">
    <property type="entry name" value="Phosphoglycerate mutase-like"/>
    <property type="match status" value="1"/>
</dbReference>
<dbReference type="HAMAP" id="MF_01039">
    <property type="entry name" value="PGAM_GpmA"/>
    <property type="match status" value="1"/>
</dbReference>
<dbReference type="InterPro" id="IPR013078">
    <property type="entry name" value="His_Pase_superF_clade-1"/>
</dbReference>
<dbReference type="InterPro" id="IPR029033">
    <property type="entry name" value="His_PPase_superfam"/>
</dbReference>
<dbReference type="InterPro" id="IPR001345">
    <property type="entry name" value="PG/BPGM_mutase_AS"/>
</dbReference>
<dbReference type="InterPro" id="IPR005952">
    <property type="entry name" value="Phosphogly_mut1"/>
</dbReference>
<dbReference type="NCBIfam" id="TIGR01258">
    <property type="entry name" value="pgm_1"/>
    <property type="match status" value="1"/>
</dbReference>
<dbReference type="NCBIfam" id="NF010713">
    <property type="entry name" value="PRK14115.1"/>
    <property type="match status" value="1"/>
</dbReference>
<dbReference type="PANTHER" id="PTHR11931">
    <property type="entry name" value="PHOSPHOGLYCERATE MUTASE"/>
    <property type="match status" value="1"/>
</dbReference>
<dbReference type="Pfam" id="PF00300">
    <property type="entry name" value="His_Phos_1"/>
    <property type="match status" value="1"/>
</dbReference>
<dbReference type="PIRSF" id="PIRSF000709">
    <property type="entry name" value="6PFK_2-Ptase"/>
    <property type="match status" value="1"/>
</dbReference>
<dbReference type="SMART" id="SM00855">
    <property type="entry name" value="PGAM"/>
    <property type="match status" value="1"/>
</dbReference>
<dbReference type="SUPFAM" id="SSF53254">
    <property type="entry name" value="Phosphoglycerate mutase-like"/>
    <property type="match status" value="1"/>
</dbReference>
<dbReference type="PROSITE" id="PS00175">
    <property type="entry name" value="PG_MUTASE"/>
    <property type="match status" value="1"/>
</dbReference>
<name>GPMA_COPPD</name>
<organism>
    <name type="scientific">Coprothermobacter proteolyticus (strain ATCC 35245 / DSM 5265 / OCM 4 / BT)</name>
    <dbReference type="NCBI Taxonomy" id="309798"/>
    <lineage>
        <taxon>Bacteria</taxon>
        <taxon>Pseudomonadati</taxon>
        <taxon>Coprothermobacterota</taxon>
        <taxon>Coprothermobacteria</taxon>
        <taxon>Coprothermobacterales</taxon>
        <taxon>Coprothermobacteraceae</taxon>
        <taxon>Coprothermobacter</taxon>
    </lineage>
</organism>
<keyword id="KW-0312">Gluconeogenesis</keyword>
<keyword id="KW-0324">Glycolysis</keyword>
<keyword id="KW-0413">Isomerase</keyword>
<keyword id="KW-1185">Reference proteome</keyword>
<comment type="function">
    <text evidence="1">Catalyzes the interconversion of 2-phosphoglycerate and 3-phosphoglycerate.</text>
</comment>
<comment type="catalytic activity">
    <reaction evidence="1">
        <text>(2R)-2-phosphoglycerate = (2R)-3-phosphoglycerate</text>
        <dbReference type="Rhea" id="RHEA:15901"/>
        <dbReference type="ChEBI" id="CHEBI:58272"/>
        <dbReference type="ChEBI" id="CHEBI:58289"/>
        <dbReference type="EC" id="5.4.2.11"/>
    </reaction>
</comment>
<comment type="pathway">
    <text evidence="1">Carbohydrate degradation; glycolysis; pyruvate from D-glyceraldehyde 3-phosphate: step 3/5.</text>
</comment>
<comment type="similarity">
    <text evidence="1">Belongs to the phosphoglycerate mutase family. BPG-dependent PGAM subfamily.</text>
</comment>
<proteinExistence type="inferred from homology"/>
<accession>B5Y7Q7</accession>
<gene>
    <name evidence="1" type="primary">gpmA</name>
    <name type="ordered locus">COPRO5265_0439</name>
</gene>
<protein>
    <recommendedName>
        <fullName evidence="1">2,3-bisphosphoglycerate-dependent phosphoglycerate mutase</fullName>
        <shortName evidence="1">BPG-dependent PGAM</shortName>
        <shortName evidence="1">PGAM</shortName>
        <shortName evidence="1">Phosphoglyceromutase</shortName>
        <shortName evidence="1">dPGM</shortName>
        <ecNumber evidence="1">5.4.2.11</ecNumber>
    </recommendedName>
</protein>
<evidence type="ECO:0000255" key="1">
    <source>
        <dbReference type="HAMAP-Rule" id="MF_01039"/>
    </source>
</evidence>
<feature type="chain" id="PRO_1000135938" description="2,3-bisphosphoglycerate-dependent phosphoglycerate mutase">
    <location>
        <begin position="1"/>
        <end position="248"/>
    </location>
</feature>
<feature type="active site" description="Tele-phosphohistidine intermediate" evidence="1">
    <location>
        <position position="9"/>
    </location>
</feature>
<feature type="active site" description="Proton donor/acceptor" evidence="1">
    <location>
        <position position="87"/>
    </location>
</feature>
<feature type="binding site" evidence="1">
    <location>
        <begin position="8"/>
        <end position="15"/>
    </location>
    <ligand>
        <name>substrate</name>
    </ligand>
</feature>
<feature type="binding site" evidence="1">
    <location>
        <begin position="21"/>
        <end position="22"/>
    </location>
    <ligand>
        <name>substrate</name>
    </ligand>
</feature>
<feature type="binding site" evidence="1">
    <location>
        <position position="60"/>
    </location>
    <ligand>
        <name>substrate</name>
    </ligand>
</feature>
<feature type="binding site" evidence="1">
    <location>
        <begin position="87"/>
        <end position="90"/>
    </location>
    <ligand>
        <name>substrate</name>
    </ligand>
</feature>
<feature type="binding site" evidence="1">
    <location>
        <position position="98"/>
    </location>
    <ligand>
        <name>substrate</name>
    </ligand>
</feature>
<feature type="binding site" evidence="1">
    <location>
        <begin position="114"/>
        <end position="115"/>
    </location>
    <ligand>
        <name>substrate</name>
    </ligand>
</feature>
<feature type="binding site" evidence="1">
    <location>
        <begin position="183"/>
        <end position="184"/>
    </location>
    <ligand>
        <name>substrate</name>
    </ligand>
</feature>
<feature type="site" description="Transition state stabilizer" evidence="1">
    <location>
        <position position="182"/>
    </location>
</feature>
<sequence>MYKVVMIRHGESEWNKLNLFTGWTDVDLSDRGVEEAIWAGKKLKEEGYTFDVAFTSVLKRAIKTLNLVLEQMNLDWIPVYKHWRLNERHYGALQGLNKAEMTERYGEQQVLLWRRSYDVPPPPLEKTDPRWPGNDPRYALVPEDELPLCESLKDTEARVVPYWADMIVPAIKEGKKVLISAHGNSMRAIVKYLDKMSGEEIAKTNIPTGIPLVYELDESMRPIRHYYLADEDFLKAKEQEVANQIYKK</sequence>
<reference key="1">
    <citation type="submission" date="2008-08" db="EMBL/GenBank/DDBJ databases">
        <title>The complete genome sequence of Coprothermobacter proteolyticus strain ATCC 5245 / DSM 5265 / BT.</title>
        <authorList>
            <person name="Dodson R.J."/>
            <person name="Durkin A.S."/>
            <person name="Wu M."/>
            <person name="Eisen J."/>
            <person name="Sutton G."/>
        </authorList>
    </citation>
    <scope>NUCLEOTIDE SEQUENCE [LARGE SCALE GENOMIC DNA]</scope>
    <source>
        <strain>ATCC 35245 / DSM 5265 / OCM 4 / BT</strain>
    </source>
</reference>